<dbReference type="EC" id="1.11.1.9" evidence="2"/>
<dbReference type="EMBL" id="AB121006">
    <property type="protein sequence ID" value="BAE17014.1"/>
    <property type="molecule type" value="mRNA"/>
</dbReference>
<dbReference type="EMBL" id="CR857195">
    <property type="protein sequence ID" value="CAH89494.2"/>
    <property type="molecule type" value="mRNA"/>
</dbReference>
<dbReference type="RefSeq" id="XP_054343429.1">
    <property type="nucleotide sequence ID" value="XM_054487454.1"/>
</dbReference>
<dbReference type="PeroxiBase" id="3727">
    <property type="entry name" value="PpyGPx03"/>
</dbReference>
<dbReference type="GeneID" id="129036399"/>
<dbReference type="KEGG" id="pon:100171486"/>
<dbReference type="GO" id="GO:0005615">
    <property type="term" value="C:extracellular space"/>
    <property type="evidence" value="ECO:0000250"/>
    <property type="project" value="UniProtKB"/>
</dbReference>
<dbReference type="GO" id="GO:0004602">
    <property type="term" value="F:glutathione peroxidase activity"/>
    <property type="evidence" value="ECO:0000250"/>
    <property type="project" value="UniProtKB"/>
</dbReference>
<dbReference type="GO" id="GO:0042802">
    <property type="term" value="F:identical protein binding"/>
    <property type="evidence" value="ECO:0000250"/>
    <property type="project" value="UniProtKB"/>
</dbReference>
<dbReference type="GO" id="GO:0008430">
    <property type="term" value="F:selenium binding"/>
    <property type="evidence" value="ECO:0000250"/>
    <property type="project" value="UniProtKB"/>
</dbReference>
<dbReference type="GO" id="GO:0042744">
    <property type="term" value="P:hydrogen peroxide catabolic process"/>
    <property type="evidence" value="ECO:0007669"/>
    <property type="project" value="TreeGrafter"/>
</dbReference>
<dbReference type="GO" id="GO:0006979">
    <property type="term" value="P:response to oxidative stress"/>
    <property type="evidence" value="ECO:0007669"/>
    <property type="project" value="InterPro"/>
</dbReference>
<dbReference type="CDD" id="cd00340">
    <property type="entry name" value="GSH_Peroxidase"/>
    <property type="match status" value="1"/>
</dbReference>
<dbReference type="FunFam" id="3.40.30.10:FF:000112">
    <property type="entry name" value="Glutathione peroxidase"/>
    <property type="match status" value="1"/>
</dbReference>
<dbReference type="Gene3D" id="3.40.30.10">
    <property type="entry name" value="Glutaredoxin"/>
    <property type="match status" value="1"/>
</dbReference>
<dbReference type="InterPro" id="IPR000889">
    <property type="entry name" value="Glutathione_peroxidase"/>
</dbReference>
<dbReference type="InterPro" id="IPR029759">
    <property type="entry name" value="GPX_AS"/>
</dbReference>
<dbReference type="InterPro" id="IPR029760">
    <property type="entry name" value="GPX_CS"/>
</dbReference>
<dbReference type="InterPro" id="IPR036249">
    <property type="entry name" value="Thioredoxin-like_sf"/>
</dbReference>
<dbReference type="PANTHER" id="PTHR11592">
    <property type="entry name" value="GLUTATHIONE PEROXIDASE"/>
    <property type="match status" value="1"/>
</dbReference>
<dbReference type="PANTHER" id="PTHR11592:SF32">
    <property type="entry name" value="GLUTATHIONE PEROXIDASE 3"/>
    <property type="match status" value="1"/>
</dbReference>
<dbReference type="Pfam" id="PF00255">
    <property type="entry name" value="GSHPx"/>
    <property type="match status" value="1"/>
</dbReference>
<dbReference type="PIRSF" id="PIRSF000303">
    <property type="entry name" value="Glutathion_perox"/>
    <property type="match status" value="1"/>
</dbReference>
<dbReference type="PRINTS" id="PR01011">
    <property type="entry name" value="GLUTPROXDASE"/>
</dbReference>
<dbReference type="SUPFAM" id="SSF52833">
    <property type="entry name" value="Thioredoxin-like"/>
    <property type="match status" value="1"/>
</dbReference>
<dbReference type="PROSITE" id="PS00460">
    <property type="entry name" value="GLUTATHIONE_PEROXID_1"/>
    <property type="match status" value="1"/>
</dbReference>
<dbReference type="PROSITE" id="PS00763">
    <property type="entry name" value="GLUTATHIONE_PEROXID_2"/>
    <property type="match status" value="1"/>
</dbReference>
<dbReference type="PROSITE" id="PS51355">
    <property type="entry name" value="GLUTATHIONE_PEROXID_3"/>
    <property type="match status" value="1"/>
</dbReference>
<organism>
    <name type="scientific">Pongo pygmaeus</name>
    <name type="common">Bornean orangutan</name>
    <dbReference type="NCBI Taxonomy" id="9600"/>
    <lineage>
        <taxon>Eukaryota</taxon>
        <taxon>Metazoa</taxon>
        <taxon>Chordata</taxon>
        <taxon>Craniata</taxon>
        <taxon>Vertebrata</taxon>
        <taxon>Euteleostomi</taxon>
        <taxon>Mammalia</taxon>
        <taxon>Eutheria</taxon>
        <taxon>Euarchontoglires</taxon>
        <taxon>Primates</taxon>
        <taxon>Haplorrhini</taxon>
        <taxon>Catarrhini</taxon>
        <taxon>Hominidae</taxon>
        <taxon>Pongo</taxon>
    </lineage>
</organism>
<comment type="function">
    <text evidence="2">Protects cells and enzymes from oxidative damage, by catalyzing the reduction of hydrogen peroxide, lipid peroxides and organic hydroperoxide, by glutathione.</text>
</comment>
<comment type="catalytic activity">
    <reaction evidence="2">
        <text>2 glutathione + H2O2 = glutathione disulfide + 2 H2O</text>
        <dbReference type="Rhea" id="RHEA:16833"/>
        <dbReference type="ChEBI" id="CHEBI:15377"/>
        <dbReference type="ChEBI" id="CHEBI:16240"/>
        <dbReference type="ChEBI" id="CHEBI:57925"/>
        <dbReference type="ChEBI" id="CHEBI:58297"/>
        <dbReference type="EC" id="1.11.1.9"/>
    </reaction>
</comment>
<comment type="catalytic activity">
    <reaction evidence="2">
        <text>tert-butyl hydroperoxide + 2 glutathione = tert-butanol + glutathione disulfide + H2O</text>
        <dbReference type="Rhea" id="RHEA:69412"/>
        <dbReference type="ChEBI" id="CHEBI:15377"/>
        <dbReference type="ChEBI" id="CHEBI:45895"/>
        <dbReference type="ChEBI" id="CHEBI:57925"/>
        <dbReference type="ChEBI" id="CHEBI:58297"/>
        <dbReference type="ChEBI" id="CHEBI:64090"/>
    </reaction>
</comment>
<comment type="subunit">
    <text evidence="1">Homotetramer.</text>
</comment>
<comment type="subcellular location">
    <subcellularLocation>
        <location>Secreted</location>
    </subcellularLocation>
</comment>
<comment type="tissue specificity">
    <text>Secreted in plasma.</text>
</comment>
<comment type="similarity">
    <text evidence="4">Belongs to the glutathione peroxidase family.</text>
</comment>
<reference key="1">
    <citation type="journal article" date="2005" name="Comp. Biochem. Physiol.">
        <title>Structure, gene expression, and evolution of primate glutathione peroxidases.</title>
        <authorList>
            <person name="Fukuhara R."/>
            <person name="Kageyama T."/>
        </authorList>
    </citation>
    <scope>NUCLEOTIDE SEQUENCE [MRNA]</scope>
</reference>
<reference key="2">
    <citation type="submission" date="2005-03" db="EMBL/GenBank/DDBJ databases">
        <authorList>
            <consortium name="The German cDNA consortium"/>
        </authorList>
    </citation>
    <scope>NUCLEOTIDE SEQUENCE [LARGE SCALE MRNA]</scope>
    <source>
        <tissue>Kidney</tissue>
    </source>
</reference>
<gene>
    <name evidence="2" type="primary">GPX3</name>
</gene>
<sequence>MARLLQASCLLSLLLAGFVPQSRGQEKSKMDCHGGISGTIYEYGALTIDGEEYIPFKQYAGKYVLFVNVASYUGLTGQYIELNALQEELAPFGLVILGFPCNQFGKQEPGENSEILPTLKYVRPGGGFVPNFQLFEKGDVNGEKEQKFYTFLKNSCPPTSELLGTSDRLFWEPMKVHDIRWNFEKFLVGPDGIPIMRWHHRTTVSNVKMDILSYMRRQAALGVKRK</sequence>
<protein>
    <recommendedName>
        <fullName evidence="2">Glutathione peroxidase 3</fullName>
        <shortName>GPx-3</shortName>
        <shortName>GSHPx-3</shortName>
        <ecNumber evidence="2">1.11.1.9</ecNumber>
    </recommendedName>
    <alternativeName>
        <fullName>Plasma glutathione peroxidase</fullName>
        <shortName>GPx-P</shortName>
        <shortName>GSHPx-P</shortName>
    </alternativeName>
</protein>
<feature type="signal peptide" evidence="3">
    <location>
        <begin position="1"/>
        <end position="24"/>
    </location>
</feature>
<feature type="chain" id="PRO_0000042615" description="Glutathione peroxidase 3">
    <location>
        <begin position="25"/>
        <end position="226"/>
    </location>
</feature>
<feature type="active site" evidence="1">
    <location>
        <position position="73"/>
    </location>
</feature>
<feature type="non-standard amino acid" description="Selenocysteine">
    <location>
        <position position="73"/>
    </location>
</feature>
<accession>Q5RFG3</accession>
<evidence type="ECO:0000250" key="1"/>
<evidence type="ECO:0000250" key="2">
    <source>
        <dbReference type="UniProtKB" id="P22352"/>
    </source>
</evidence>
<evidence type="ECO:0000255" key="3"/>
<evidence type="ECO:0000305" key="4"/>
<proteinExistence type="evidence at transcript level"/>
<keyword id="KW-0560">Oxidoreductase</keyword>
<keyword id="KW-0575">Peroxidase</keyword>
<keyword id="KW-0964">Secreted</keyword>
<keyword id="KW-0712">Selenocysteine</keyword>
<keyword id="KW-0732">Signal</keyword>
<name>GPX3_PONPY</name>